<sequence>MKFFIDTANVDEIKKAWEVGVIDGVTTNPSLLAKEGKEPVSLLKEICQIVDGPVSAEAVSLKYEDMLKESIELSKIHSNIVIKIPMTEDGLKTVRKLSQEGIKTNVTLVFSPTQALLAAKAGATYVSPFVGRLDDISHFGMELVRDIQIIFENYGFDTEVIVASIRNPLHVLEAARIGADIATIPYSVIKQLIKHPLTDIGIERFLKDWEKLKK</sequence>
<feature type="chain" id="PRO_1000126371" description="Probable transaldolase">
    <location>
        <begin position="1"/>
        <end position="214"/>
    </location>
</feature>
<feature type="active site" description="Schiff-base intermediate with substrate" evidence="1">
    <location>
        <position position="83"/>
    </location>
</feature>
<accession>B5YHV2</accession>
<evidence type="ECO:0000255" key="1">
    <source>
        <dbReference type="HAMAP-Rule" id="MF_00494"/>
    </source>
</evidence>
<organism>
    <name type="scientific">Thermodesulfovibrio yellowstonii (strain ATCC 51303 / DSM 11347 / YP87)</name>
    <dbReference type="NCBI Taxonomy" id="289376"/>
    <lineage>
        <taxon>Bacteria</taxon>
        <taxon>Pseudomonadati</taxon>
        <taxon>Nitrospirota</taxon>
        <taxon>Thermodesulfovibrionia</taxon>
        <taxon>Thermodesulfovibrionales</taxon>
        <taxon>Thermodesulfovibrionaceae</taxon>
        <taxon>Thermodesulfovibrio</taxon>
    </lineage>
</organism>
<reference key="1">
    <citation type="submission" date="2008-08" db="EMBL/GenBank/DDBJ databases">
        <title>The complete genome sequence of Thermodesulfovibrio yellowstonii strain ATCC 51303 / DSM 11347 / YP87.</title>
        <authorList>
            <person name="Dodson R.J."/>
            <person name="Durkin A.S."/>
            <person name="Wu M."/>
            <person name="Eisen J."/>
            <person name="Sutton G."/>
        </authorList>
    </citation>
    <scope>NUCLEOTIDE SEQUENCE [LARGE SCALE GENOMIC DNA]</scope>
    <source>
        <strain>ATCC 51303 / DSM 11347 / YP87</strain>
    </source>
</reference>
<keyword id="KW-0963">Cytoplasm</keyword>
<keyword id="KW-0570">Pentose shunt</keyword>
<keyword id="KW-1185">Reference proteome</keyword>
<keyword id="KW-0704">Schiff base</keyword>
<keyword id="KW-0808">Transferase</keyword>
<proteinExistence type="inferred from homology"/>
<protein>
    <recommendedName>
        <fullName evidence="1">Probable transaldolase</fullName>
        <ecNumber evidence="1">2.2.1.2</ecNumber>
    </recommendedName>
</protein>
<dbReference type="EC" id="2.2.1.2" evidence="1"/>
<dbReference type="EMBL" id="CP001147">
    <property type="protein sequence ID" value="ACI20214.1"/>
    <property type="molecule type" value="Genomic_DNA"/>
</dbReference>
<dbReference type="RefSeq" id="WP_012544952.1">
    <property type="nucleotide sequence ID" value="NC_011296.1"/>
</dbReference>
<dbReference type="RefSeq" id="YP_002248018.1">
    <property type="nucleotide sequence ID" value="NC_011296.1"/>
</dbReference>
<dbReference type="SMR" id="B5YHV2"/>
<dbReference type="FunCoup" id="B5YHV2">
    <property type="interactions" value="209"/>
</dbReference>
<dbReference type="STRING" id="289376.THEYE_A0167"/>
<dbReference type="EnsemblBacteria" id="ACI20214">
    <property type="protein sequence ID" value="ACI20214"/>
    <property type="gene ID" value="THEYE_A0167"/>
</dbReference>
<dbReference type="KEGG" id="tye:THEYE_A0167"/>
<dbReference type="PATRIC" id="fig|289376.4.peg.164"/>
<dbReference type="eggNOG" id="COG0176">
    <property type="taxonomic scope" value="Bacteria"/>
</dbReference>
<dbReference type="HOGENOM" id="CLU_079764_0_0_0"/>
<dbReference type="InParanoid" id="B5YHV2"/>
<dbReference type="OrthoDB" id="9807051at2"/>
<dbReference type="UniPathway" id="UPA00115">
    <property type="reaction ID" value="UER00414"/>
</dbReference>
<dbReference type="Proteomes" id="UP000000718">
    <property type="component" value="Chromosome"/>
</dbReference>
<dbReference type="GO" id="GO:0005737">
    <property type="term" value="C:cytoplasm"/>
    <property type="evidence" value="ECO:0007669"/>
    <property type="project" value="UniProtKB-SubCell"/>
</dbReference>
<dbReference type="GO" id="GO:0016832">
    <property type="term" value="F:aldehyde-lyase activity"/>
    <property type="evidence" value="ECO:0007669"/>
    <property type="project" value="InterPro"/>
</dbReference>
<dbReference type="GO" id="GO:0004801">
    <property type="term" value="F:transaldolase activity"/>
    <property type="evidence" value="ECO:0007669"/>
    <property type="project" value="UniProtKB-UniRule"/>
</dbReference>
<dbReference type="GO" id="GO:0005975">
    <property type="term" value="P:carbohydrate metabolic process"/>
    <property type="evidence" value="ECO:0007669"/>
    <property type="project" value="InterPro"/>
</dbReference>
<dbReference type="GO" id="GO:0006098">
    <property type="term" value="P:pentose-phosphate shunt"/>
    <property type="evidence" value="ECO:0007669"/>
    <property type="project" value="UniProtKB-UniRule"/>
</dbReference>
<dbReference type="CDD" id="cd00956">
    <property type="entry name" value="Transaldolase_FSA"/>
    <property type="match status" value="1"/>
</dbReference>
<dbReference type="FunFam" id="3.20.20.70:FF:000018">
    <property type="entry name" value="Probable transaldolase"/>
    <property type="match status" value="1"/>
</dbReference>
<dbReference type="Gene3D" id="3.20.20.70">
    <property type="entry name" value="Aldolase class I"/>
    <property type="match status" value="1"/>
</dbReference>
<dbReference type="HAMAP" id="MF_00494">
    <property type="entry name" value="Transaldolase_3b"/>
    <property type="match status" value="1"/>
</dbReference>
<dbReference type="InterPro" id="IPR013785">
    <property type="entry name" value="Aldolase_TIM"/>
</dbReference>
<dbReference type="InterPro" id="IPR001585">
    <property type="entry name" value="TAL/FSA"/>
</dbReference>
<dbReference type="InterPro" id="IPR022999">
    <property type="entry name" value="Transaldolase_3B"/>
</dbReference>
<dbReference type="InterPro" id="IPR004731">
    <property type="entry name" value="Transaldolase_3B/F6P_aldolase"/>
</dbReference>
<dbReference type="InterPro" id="IPR018225">
    <property type="entry name" value="Transaldolase_AS"/>
</dbReference>
<dbReference type="InterPro" id="IPR033919">
    <property type="entry name" value="TSA/FSA_arc/bac"/>
</dbReference>
<dbReference type="NCBIfam" id="TIGR00875">
    <property type="entry name" value="fsa_talC_mipB"/>
    <property type="match status" value="1"/>
</dbReference>
<dbReference type="PANTHER" id="PTHR10683:SF40">
    <property type="entry name" value="FRUCTOSE-6-PHOSPHATE ALDOLASE 1-RELATED"/>
    <property type="match status" value="1"/>
</dbReference>
<dbReference type="PANTHER" id="PTHR10683">
    <property type="entry name" value="TRANSALDOLASE"/>
    <property type="match status" value="1"/>
</dbReference>
<dbReference type="Pfam" id="PF00923">
    <property type="entry name" value="TAL_FSA"/>
    <property type="match status" value="1"/>
</dbReference>
<dbReference type="SUPFAM" id="SSF51569">
    <property type="entry name" value="Aldolase"/>
    <property type="match status" value="1"/>
</dbReference>
<dbReference type="PROSITE" id="PS01054">
    <property type="entry name" value="TRANSALDOLASE_1"/>
    <property type="match status" value="1"/>
</dbReference>
<name>TAL_THEYD</name>
<gene>
    <name evidence="1" type="primary">tal</name>
    <name type="ordered locus">THEYE_A0167</name>
</gene>
<comment type="function">
    <text evidence="1">Transaldolase is important for the balance of metabolites in the pentose-phosphate pathway.</text>
</comment>
<comment type="catalytic activity">
    <reaction evidence="1">
        <text>D-sedoheptulose 7-phosphate + D-glyceraldehyde 3-phosphate = D-erythrose 4-phosphate + beta-D-fructose 6-phosphate</text>
        <dbReference type="Rhea" id="RHEA:17053"/>
        <dbReference type="ChEBI" id="CHEBI:16897"/>
        <dbReference type="ChEBI" id="CHEBI:57483"/>
        <dbReference type="ChEBI" id="CHEBI:57634"/>
        <dbReference type="ChEBI" id="CHEBI:59776"/>
        <dbReference type="EC" id="2.2.1.2"/>
    </reaction>
</comment>
<comment type="pathway">
    <text evidence="1">Carbohydrate degradation; pentose phosphate pathway; D-glyceraldehyde 3-phosphate and beta-D-fructose 6-phosphate from D-ribose 5-phosphate and D-xylulose 5-phosphate (non-oxidative stage): step 2/3.</text>
</comment>
<comment type="subcellular location">
    <subcellularLocation>
        <location evidence="1">Cytoplasm</location>
    </subcellularLocation>
</comment>
<comment type="similarity">
    <text evidence="1">Belongs to the transaldolase family. Type 3B subfamily.</text>
</comment>